<protein>
    <recommendedName>
        <fullName evidence="1">2-C-methyl-D-erythritol 4-phosphate cytidylyltransferase</fullName>
        <ecNumber evidence="1">2.7.7.60</ecNumber>
    </recommendedName>
    <alternativeName>
        <fullName evidence="1">4-diphosphocytidyl-2C-methyl-D-erythritol synthase</fullName>
    </alternativeName>
    <alternativeName>
        <fullName evidence="1">MEP cytidylyltransferase</fullName>
        <shortName evidence="1">MCT</shortName>
    </alternativeName>
</protein>
<name>ISPD_SYNJA</name>
<dbReference type="EC" id="2.7.7.60" evidence="1"/>
<dbReference type="EMBL" id="CP000239">
    <property type="protein sequence ID" value="ABC99672.1"/>
    <property type="molecule type" value="Genomic_DNA"/>
</dbReference>
<dbReference type="RefSeq" id="WP_011430350.1">
    <property type="nucleotide sequence ID" value="NC_007775.1"/>
</dbReference>
<dbReference type="SMR" id="Q2JUE5"/>
<dbReference type="STRING" id="321327.CYA_1505"/>
<dbReference type="KEGG" id="cya:CYA_1505"/>
<dbReference type="eggNOG" id="COG1211">
    <property type="taxonomic scope" value="Bacteria"/>
</dbReference>
<dbReference type="HOGENOM" id="CLU_061281_1_0_3"/>
<dbReference type="OrthoDB" id="9806837at2"/>
<dbReference type="UniPathway" id="UPA00056">
    <property type="reaction ID" value="UER00093"/>
</dbReference>
<dbReference type="Proteomes" id="UP000008818">
    <property type="component" value="Chromosome"/>
</dbReference>
<dbReference type="GO" id="GO:0050518">
    <property type="term" value="F:2-C-methyl-D-erythritol 4-phosphate cytidylyltransferase activity"/>
    <property type="evidence" value="ECO:0007669"/>
    <property type="project" value="UniProtKB-UniRule"/>
</dbReference>
<dbReference type="GO" id="GO:0019288">
    <property type="term" value="P:isopentenyl diphosphate biosynthetic process, methylerythritol 4-phosphate pathway"/>
    <property type="evidence" value="ECO:0007669"/>
    <property type="project" value="UniProtKB-UniRule"/>
</dbReference>
<dbReference type="CDD" id="cd02516">
    <property type="entry name" value="CDP-ME_synthetase"/>
    <property type="match status" value="1"/>
</dbReference>
<dbReference type="FunFam" id="3.90.550.10:FF:000003">
    <property type="entry name" value="2-C-methyl-D-erythritol 4-phosphate cytidylyltransferase"/>
    <property type="match status" value="1"/>
</dbReference>
<dbReference type="Gene3D" id="3.90.550.10">
    <property type="entry name" value="Spore Coat Polysaccharide Biosynthesis Protein SpsA, Chain A"/>
    <property type="match status" value="1"/>
</dbReference>
<dbReference type="HAMAP" id="MF_00108">
    <property type="entry name" value="IspD"/>
    <property type="match status" value="1"/>
</dbReference>
<dbReference type="InterPro" id="IPR001228">
    <property type="entry name" value="IspD"/>
</dbReference>
<dbReference type="InterPro" id="IPR034683">
    <property type="entry name" value="IspD/TarI"/>
</dbReference>
<dbReference type="InterPro" id="IPR050088">
    <property type="entry name" value="IspD/TarI_cytidylyltransf_bact"/>
</dbReference>
<dbReference type="InterPro" id="IPR018294">
    <property type="entry name" value="ISPD_synthase_CS"/>
</dbReference>
<dbReference type="InterPro" id="IPR029044">
    <property type="entry name" value="Nucleotide-diphossugar_trans"/>
</dbReference>
<dbReference type="NCBIfam" id="TIGR00453">
    <property type="entry name" value="ispD"/>
    <property type="match status" value="1"/>
</dbReference>
<dbReference type="PANTHER" id="PTHR32125">
    <property type="entry name" value="2-C-METHYL-D-ERYTHRITOL 4-PHOSPHATE CYTIDYLYLTRANSFERASE, CHLOROPLASTIC"/>
    <property type="match status" value="1"/>
</dbReference>
<dbReference type="PANTHER" id="PTHR32125:SF4">
    <property type="entry name" value="2-C-METHYL-D-ERYTHRITOL 4-PHOSPHATE CYTIDYLYLTRANSFERASE, CHLOROPLASTIC"/>
    <property type="match status" value="1"/>
</dbReference>
<dbReference type="Pfam" id="PF01128">
    <property type="entry name" value="IspD"/>
    <property type="match status" value="1"/>
</dbReference>
<dbReference type="SUPFAM" id="SSF53448">
    <property type="entry name" value="Nucleotide-diphospho-sugar transferases"/>
    <property type="match status" value="1"/>
</dbReference>
<dbReference type="PROSITE" id="PS01295">
    <property type="entry name" value="ISPD"/>
    <property type="match status" value="1"/>
</dbReference>
<sequence length="235" mass="25818">MHLLIPAAGSGKRMGAAVNKLLLPLLGQPILAWTLQAADRASSIEWIGILSQPGDWPAIEQILAAMDLSTPVQLLQGGATRQESVYRGVEYLYNLGTVERVLIHDGARCLATPKLFDRCSAALQQVDGLIAGIPVKDTIKVTETGPKGIQIQSTPERSRLWAAQTPQGFRLSLLWQAHREALAQGWQVTDDAALFEKLGWPVYIVEGEESNLKLTTPWDLVLAEQILQQRLELAR</sequence>
<gene>
    <name evidence="1" type="primary">ispD</name>
    <name type="ordered locus">CYA_1505</name>
</gene>
<feature type="chain" id="PRO_0000237830" description="2-C-methyl-D-erythritol 4-phosphate cytidylyltransferase">
    <location>
        <begin position="1"/>
        <end position="235"/>
    </location>
</feature>
<feature type="site" description="Transition state stabilizer" evidence="1">
    <location>
        <position position="13"/>
    </location>
</feature>
<feature type="site" description="Transition state stabilizer" evidence="1">
    <location>
        <position position="20"/>
    </location>
</feature>
<feature type="site" description="Positions MEP for the nucleophilic attack" evidence="1">
    <location>
        <position position="157"/>
    </location>
</feature>
<feature type="site" description="Positions MEP for the nucleophilic attack" evidence="1">
    <location>
        <position position="213"/>
    </location>
</feature>
<comment type="function">
    <text evidence="1">Catalyzes the formation of 4-diphosphocytidyl-2-C-methyl-D-erythritol from CTP and 2-C-methyl-D-erythritol 4-phosphate (MEP).</text>
</comment>
<comment type="catalytic activity">
    <reaction evidence="1">
        <text>2-C-methyl-D-erythritol 4-phosphate + CTP + H(+) = 4-CDP-2-C-methyl-D-erythritol + diphosphate</text>
        <dbReference type="Rhea" id="RHEA:13429"/>
        <dbReference type="ChEBI" id="CHEBI:15378"/>
        <dbReference type="ChEBI" id="CHEBI:33019"/>
        <dbReference type="ChEBI" id="CHEBI:37563"/>
        <dbReference type="ChEBI" id="CHEBI:57823"/>
        <dbReference type="ChEBI" id="CHEBI:58262"/>
        <dbReference type="EC" id="2.7.7.60"/>
    </reaction>
</comment>
<comment type="pathway">
    <text evidence="1">Isoprenoid biosynthesis; isopentenyl diphosphate biosynthesis via DXP pathway; isopentenyl diphosphate from 1-deoxy-D-xylulose 5-phosphate: step 2/6.</text>
</comment>
<comment type="similarity">
    <text evidence="1">Belongs to the IspD/TarI cytidylyltransferase family. IspD subfamily.</text>
</comment>
<accession>Q2JUE5</accession>
<reference key="1">
    <citation type="journal article" date="2007" name="ISME J.">
        <title>Population level functional diversity in a microbial community revealed by comparative genomic and metagenomic analyses.</title>
        <authorList>
            <person name="Bhaya D."/>
            <person name="Grossman A.R."/>
            <person name="Steunou A.-S."/>
            <person name="Khuri N."/>
            <person name="Cohan F.M."/>
            <person name="Hamamura N."/>
            <person name="Melendrez M.C."/>
            <person name="Bateson M.M."/>
            <person name="Ward D.M."/>
            <person name="Heidelberg J.F."/>
        </authorList>
    </citation>
    <scope>NUCLEOTIDE SEQUENCE [LARGE SCALE GENOMIC DNA]</scope>
    <source>
        <strain>JA-3-3Ab</strain>
    </source>
</reference>
<evidence type="ECO:0000255" key="1">
    <source>
        <dbReference type="HAMAP-Rule" id="MF_00108"/>
    </source>
</evidence>
<organism>
    <name type="scientific">Synechococcus sp. (strain JA-3-3Ab)</name>
    <name type="common">Cyanobacteria bacterium Yellowstone A-Prime</name>
    <dbReference type="NCBI Taxonomy" id="321327"/>
    <lineage>
        <taxon>Bacteria</taxon>
        <taxon>Bacillati</taxon>
        <taxon>Cyanobacteriota</taxon>
        <taxon>Cyanophyceae</taxon>
        <taxon>Synechococcales</taxon>
        <taxon>Synechococcaceae</taxon>
        <taxon>Synechococcus</taxon>
    </lineage>
</organism>
<proteinExistence type="inferred from homology"/>
<keyword id="KW-0414">Isoprene biosynthesis</keyword>
<keyword id="KW-0548">Nucleotidyltransferase</keyword>
<keyword id="KW-0808">Transferase</keyword>